<comment type="function">
    <text evidence="4">Has acyl-CoA thioesterase activity towards long-chain (C16 and C18) fatty acyl-CoA substrates, with a preference for linoleoyl-CoA and other unsaturated long-chain fatty acid-CoA esters (PubMed:22586271). Plays an important role in mitochondrial fatty acid metabolism, and in remodeling of the mitochondrial lipid cardiolipin (PubMed:22586271). Required for normal mitochondrial function (PubMed:22586271).</text>
</comment>
<comment type="catalytic activity">
    <reaction evidence="4">
        <text>hexadecanoyl-CoA + H2O = hexadecanoate + CoA + H(+)</text>
        <dbReference type="Rhea" id="RHEA:16645"/>
        <dbReference type="ChEBI" id="CHEBI:7896"/>
        <dbReference type="ChEBI" id="CHEBI:15377"/>
        <dbReference type="ChEBI" id="CHEBI:15378"/>
        <dbReference type="ChEBI" id="CHEBI:57287"/>
        <dbReference type="ChEBI" id="CHEBI:57379"/>
        <dbReference type="EC" id="3.1.2.2"/>
    </reaction>
    <physiologicalReaction direction="left-to-right" evidence="6">
        <dbReference type="Rhea" id="RHEA:16646"/>
    </physiologicalReaction>
</comment>
<comment type="catalytic activity">
    <reaction evidence="4">
        <text>(9Z,12Z)-octadecadienoyl-CoA + H2O = (9Z,12Z)-octadecadienoate + CoA + H(+)</text>
        <dbReference type="Rhea" id="RHEA:40143"/>
        <dbReference type="ChEBI" id="CHEBI:15377"/>
        <dbReference type="ChEBI" id="CHEBI:15378"/>
        <dbReference type="ChEBI" id="CHEBI:30245"/>
        <dbReference type="ChEBI" id="CHEBI:57287"/>
        <dbReference type="ChEBI" id="CHEBI:57383"/>
    </reaction>
    <physiologicalReaction direction="left-to-right" evidence="6">
        <dbReference type="Rhea" id="RHEA:40144"/>
    </physiologicalReaction>
</comment>
<comment type="catalytic activity">
    <reaction evidence="4">
        <text>tetradecanoyl-CoA + H2O = tetradecanoate + CoA + H(+)</text>
        <dbReference type="Rhea" id="RHEA:40119"/>
        <dbReference type="ChEBI" id="CHEBI:15377"/>
        <dbReference type="ChEBI" id="CHEBI:15378"/>
        <dbReference type="ChEBI" id="CHEBI:30807"/>
        <dbReference type="ChEBI" id="CHEBI:57287"/>
        <dbReference type="ChEBI" id="CHEBI:57385"/>
    </reaction>
    <physiologicalReaction direction="left-to-right" evidence="6">
        <dbReference type="Rhea" id="RHEA:40120"/>
    </physiologicalReaction>
</comment>
<comment type="catalytic activity">
    <reaction evidence="4">
        <text>(9Z)-octadecenoyl-CoA + H2O = (9Z)-octadecenoate + CoA + H(+)</text>
        <dbReference type="Rhea" id="RHEA:40139"/>
        <dbReference type="ChEBI" id="CHEBI:15377"/>
        <dbReference type="ChEBI" id="CHEBI:15378"/>
        <dbReference type="ChEBI" id="CHEBI:30823"/>
        <dbReference type="ChEBI" id="CHEBI:57287"/>
        <dbReference type="ChEBI" id="CHEBI:57387"/>
    </reaction>
    <physiologicalReaction direction="left-to-right" evidence="6">
        <dbReference type="Rhea" id="RHEA:40140"/>
    </physiologicalReaction>
</comment>
<comment type="catalytic activity">
    <reaction evidence="4">
        <text>(9Z)-hexadecenoyl-CoA + H2O = (9Z)-hexadecenoate + CoA + H(+)</text>
        <dbReference type="Rhea" id="RHEA:40131"/>
        <dbReference type="ChEBI" id="CHEBI:15377"/>
        <dbReference type="ChEBI" id="CHEBI:15378"/>
        <dbReference type="ChEBI" id="CHEBI:32372"/>
        <dbReference type="ChEBI" id="CHEBI:57287"/>
        <dbReference type="ChEBI" id="CHEBI:61540"/>
    </reaction>
    <physiologicalReaction direction="left-to-right" evidence="6">
        <dbReference type="Rhea" id="RHEA:40132"/>
    </physiologicalReaction>
</comment>
<comment type="catalytic activity">
    <reaction evidence="4">
        <text>(5Z,8Z,11Z,14Z)-eicosatetraenoyl-CoA + H2O = (5Z,8Z,11Z,14Z)-eicosatetraenoate + CoA + H(+)</text>
        <dbReference type="Rhea" id="RHEA:40151"/>
        <dbReference type="ChEBI" id="CHEBI:15377"/>
        <dbReference type="ChEBI" id="CHEBI:15378"/>
        <dbReference type="ChEBI" id="CHEBI:32395"/>
        <dbReference type="ChEBI" id="CHEBI:57287"/>
        <dbReference type="ChEBI" id="CHEBI:57368"/>
    </reaction>
    <physiologicalReaction direction="left-to-right" evidence="6">
        <dbReference type="Rhea" id="RHEA:40152"/>
    </physiologicalReaction>
</comment>
<comment type="catalytic activity">
    <reaction evidence="4">
        <text>octadecanoyl-CoA + H2O = octadecanoate + CoA + H(+)</text>
        <dbReference type="Rhea" id="RHEA:30139"/>
        <dbReference type="ChEBI" id="CHEBI:15377"/>
        <dbReference type="ChEBI" id="CHEBI:15378"/>
        <dbReference type="ChEBI" id="CHEBI:25629"/>
        <dbReference type="ChEBI" id="CHEBI:57287"/>
        <dbReference type="ChEBI" id="CHEBI:57394"/>
    </reaction>
    <physiologicalReaction direction="left-to-right" evidence="6">
        <dbReference type="Rhea" id="RHEA:30140"/>
    </physiologicalReaction>
</comment>
<comment type="biophysicochemical properties">
    <kinetics>
        <KM evidence="4">2.4 uM for palmitoyl-CoA (C16:0)</KM>
        <KM evidence="4">4.2 uM for stearoyl-CoA (C18:0)</KM>
        <KM evidence="4">2.9 uM for oleoyl-CoA (C18:1)</KM>
        <KM evidence="4">4.2 uM for linoleoyl-CoA (C18:2)</KM>
    </kinetics>
</comment>
<comment type="subunit">
    <text evidence="4">Homodimer.</text>
</comment>
<comment type="interaction">
    <interactant intactId="EBI-10264970">
        <id>Q8N1Q8</id>
    </interactant>
    <interactant intactId="EBI-10178634">
        <id>P43364-2</id>
        <label>MAGEA11</label>
    </interactant>
    <organismsDiffer>false</organismsDiffer>
    <experiments>3</experiments>
</comment>
<comment type="interaction">
    <interactant intactId="EBI-10264970">
        <id>Q8N1Q8</id>
    </interactant>
    <interactant intactId="EBI-1049004">
        <id>P57105</id>
        <label>SYNJ2BP</label>
    </interactant>
    <organismsDiffer>false</organismsDiffer>
    <experiments>3</experiments>
</comment>
<comment type="subcellular location">
    <subcellularLocation>
        <location evidence="4">Mitochondrion matrix</location>
    </subcellularLocation>
</comment>
<comment type="similarity">
    <text evidence="5">Belongs to the THEM4/THEM5 thioesterase family.</text>
</comment>
<gene>
    <name type="primary">THEM5</name>
    <name type="synonym">ACOT15</name>
</gene>
<name>THEM5_HUMAN</name>
<accession>Q8N1Q8</accession>
<accession>Q5T1C3</accession>
<feature type="chain" id="PRO_0000284519" description="Acyl-coenzyme A thioesterase THEM5">
    <location>
        <begin position="1"/>
        <end position="247"/>
    </location>
</feature>
<feature type="active site" description="Proton donor/acceptor" evidence="1">
    <location>
        <position position="167"/>
    </location>
</feature>
<feature type="sequence variant" id="VAR_031764" description="In dbSNP:rs16833597.">
    <original>Y</original>
    <variation>S</variation>
    <location>
        <position position="55"/>
    </location>
</feature>
<feature type="sequence variant" id="VAR_031765" description="In dbSNP:rs6587625.">
    <original>D</original>
    <variation>G</variation>
    <location>
        <position position="197"/>
    </location>
</feature>
<feature type="sequence variant" id="VAR_031766" description="In dbSNP:rs6587624." evidence="2 3">
    <original>L</original>
    <variation>V</variation>
    <location>
        <position position="206"/>
    </location>
</feature>
<feature type="mutagenesis site" description="Strongly reduces enzyme activity. Abolishes enzyme activity; when associated with A-183." evidence="4">
    <original>G</original>
    <variation>A</variation>
    <location>
        <position position="160"/>
    </location>
</feature>
<feature type="mutagenesis site" description="Abolishes enzyme activity." evidence="4">
    <original>D</original>
    <variation>A</variation>
    <location>
        <position position="167"/>
    </location>
</feature>
<feature type="mutagenesis site" description="Reduces enzyme activity. Abolishes enzyme activity; when associated with A-160." evidence="4">
    <original>T</original>
    <variation>A</variation>
    <location>
        <position position="183"/>
    </location>
</feature>
<feature type="strand" evidence="7">
    <location>
        <begin position="55"/>
        <end position="57"/>
    </location>
</feature>
<feature type="helix" evidence="7">
    <location>
        <begin position="64"/>
        <end position="79"/>
    </location>
</feature>
<feature type="helix" evidence="7">
    <location>
        <begin position="116"/>
        <end position="118"/>
    </location>
</feature>
<feature type="turn" evidence="7">
    <location>
        <begin position="123"/>
        <end position="125"/>
    </location>
</feature>
<feature type="strand" evidence="7">
    <location>
        <begin position="126"/>
        <end position="134"/>
    </location>
</feature>
<feature type="turn" evidence="7">
    <location>
        <begin position="135"/>
        <end position="138"/>
    </location>
</feature>
<feature type="strand" evidence="7">
    <location>
        <begin position="139"/>
        <end position="146"/>
    </location>
</feature>
<feature type="helix" evidence="7">
    <location>
        <begin position="148"/>
        <end position="150"/>
    </location>
</feature>
<feature type="strand" evidence="7">
    <location>
        <begin position="151"/>
        <end position="153"/>
    </location>
</feature>
<feature type="helix" evidence="7">
    <location>
        <begin position="159"/>
        <end position="178"/>
    </location>
</feature>
<feature type="strand" evidence="7">
    <location>
        <begin position="180"/>
        <end position="190"/>
    </location>
</feature>
<feature type="strand" evidence="7">
    <location>
        <begin position="200"/>
        <end position="210"/>
    </location>
</feature>
<feature type="strand" evidence="7">
    <location>
        <begin position="213"/>
        <end position="221"/>
    </location>
</feature>
<feature type="strand" evidence="7">
    <location>
        <begin position="228"/>
        <end position="238"/>
    </location>
</feature>
<sequence>MIRRCFQVAARLGHHRGLLEAPRILPRLNPASAFGSSTDSMFSRFLPEKTDLKDYALPNASWCSDMLSLYQEFLEKTKSSGWIKLPSFKSNRDHIRGLKLPSGLAVSSDKGDCRIFTRCIQVEGQGFEYVIFFQPTQKKSVCLFQPGSYLEGPPGFAHGGSLAAMMDETFSKTAFLAGEGLFTLSLNIRFKNLIPVDSLVVMDVELDKIEDQKLYMSCIAHSRDQQTVYAKSSGVFLQLQLEEESPQ</sequence>
<reference key="1">
    <citation type="journal article" date="2004" name="Nat. Genet.">
        <title>Complete sequencing and characterization of 21,243 full-length human cDNAs.</title>
        <authorList>
            <person name="Ota T."/>
            <person name="Suzuki Y."/>
            <person name="Nishikawa T."/>
            <person name="Otsuki T."/>
            <person name="Sugiyama T."/>
            <person name="Irie R."/>
            <person name="Wakamatsu A."/>
            <person name="Hayashi K."/>
            <person name="Sato H."/>
            <person name="Nagai K."/>
            <person name="Kimura K."/>
            <person name="Makita H."/>
            <person name="Sekine M."/>
            <person name="Obayashi M."/>
            <person name="Nishi T."/>
            <person name="Shibahara T."/>
            <person name="Tanaka T."/>
            <person name="Ishii S."/>
            <person name="Yamamoto J."/>
            <person name="Saito K."/>
            <person name="Kawai Y."/>
            <person name="Isono Y."/>
            <person name="Nakamura Y."/>
            <person name="Nagahari K."/>
            <person name="Murakami K."/>
            <person name="Yasuda T."/>
            <person name="Iwayanagi T."/>
            <person name="Wagatsuma M."/>
            <person name="Shiratori A."/>
            <person name="Sudo H."/>
            <person name="Hosoiri T."/>
            <person name="Kaku Y."/>
            <person name="Kodaira H."/>
            <person name="Kondo H."/>
            <person name="Sugawara M."/>
            <person name="Takahashi M."/>
            <person name="Kanda K."/>
            <person name="Yokoi T."/>
            <person name="Furuya T."/>
            <person name="Kikkawa E."/>
            <person name="Omura Y."/>
            <person name="Abe K."/>
            <person name="Kamihara K."/>
            <person name="Katsuta N."/>
            <person name="Sato K."/>
            <person name="Tanikawa M."/>
            <person name="Yamazaki M."/>
            <person name="Ninomiya K."/>
            <person name="Ishibashi T."/>
            <person name="Yamashita H."/>
            <person name="Murakawa K."/>
            <person name="Fujimori K."/>
            <person name="Tanai H."/>
            <person name="Kimata M."/>
            <person name="Watanabe M."/>
            <person name="Hiraoka S."/>
            <person name="Chiba Y."/>
            <person name="Ishida S."/>
            <person name="Ono Y."/>
            <person name="Takiguchi S."/>
            <person name="Watanabe S."/>
            <person name="Yosida M."/>
            <person name="Hotuta T."/>
            <person name="Kusano J."/>
            <person name="Kanehori K."/>
            <person name="Takahashi-Fujii A."/>
            <person name="Hara H."/>
            <person name="Tanase T.-O."/>
            <person name="Nomura Y."/>
            <person name="Togiya S."/>
            <person name="Komai F."/>
            <person name="Hara R."/>
            <person name="Takeuchi K."/>
            <person name="Arita M."/>
            <person name="Imose N."/>
            <person name="Musashino K."/>
            <person name="Yuuki H."/>
            <person name="Oshima A."/>
            <person name="Sasaki N."/>
            <person name="Aotsuka S."/>
            <person name="Yoshikawa Y."/>
            <person name="Matsunawa H."/>
            <person name="Ichihara T."/>
            <person name="Shiohata N."/>
            <person name="Sano S."/>
            <person name="Moriya S."/>
            <person name="Momiyama H."/>
            <person name="Satoh N."/>
            <person name="Takami S."/>
            <person name="Terashima Y."/>
            <person name="Suzuki O."/>
            <person name="Nakagawa S."/>
            <person name="Senoh A."/>
            <person name="Mizoguchi H."/>
            <person name="Goto Y."/>
            <person name="Shimizu F."/>
            <person name="Wakebe H."/>
            <person name="Hishigaki H."/>
            <person name="Watanabe T."/>
            <person name="Sugiyama A."/>
            <person name="Takemoto M."/>
            <person name="Kawakami B."/>
            <person name="Yamazaki M."/>
            <person name="Watanabe K."/>
            <person name="Kumagai A."/>
            <person name="Itakura S."/>
            <person name="Fukuzumi Y."/>
            <person name="Fujimori Y."/>
            <person name="Komiyama M."/>
            <person name="Tashiro H."/>
            <person name="Tanigami A."/>
            <person name="Fujiwara T."/>
            <person name="Ono T."/>
            <person name="Yamada K."/>
            <person name="Fujii Y."/>
            <person name="Ozaki K."/>
            <person name="Hirao M."/>
            <person name="Ohmori Y."/>
            <person name="Kawabata A."/>
            <person name="Hikiji T."/>
            <person name="Kobatake N."/>
            <person name="Inagaki H."/>
            <person name="Ikema Y."/>
            <person name="Okamoto S."/>
            <person name="Okitani R."/>
            <person name="Kawakami T."/>
            <person name="Noguchi S."/>
            <person name="Itoh T."/>
            <person name="Shigeta K."/>
            <person name="Senba T."/>
            <person name="Matsumura K."/>
            <person name="Nakajima Y."/>
            <person name="Mizuno T."/>
            <person name="Morinaga M."/>
            <person name="Sasaki M."/>
            <person name="Togashi T."/>
            <person name="Oyama M."/>
            <person name="Hata H."/>
            <person name="Watanabe M."/>
            <person name="Komatsu T."/>
            <person name="Mizushima-Sugano J."/>
            <person name="Satoh T."/>
            <person name="Shirai Y."/>
            <person name="Takahashi Y."/>
            <person name="Nakagawa K."/>
            <person name="Okumura K."/>
            <person name="Nagase T."/>
            <person name="Nomura N."/>
            <person name="Kikuchi H."/>
            <person name="Masuho Y."/>
            <person name="Yamashita R."/>
            <person name="Nakai K."/>
            <person name="Yada T."/>
            <person name="Nakamura Y."/>
            <person name="Ohara O."/>
            <person name="Isogai T."/>
            <person name="Sugano S."/>
        </authorList>
    </citation>
    <scope>NUCLEOTIDE SEQUENCE [LARGE SCALE MRNA]</scope>
    <scope>VARIANT VAL-206</scope>
    <source>
        <tissue>Tongue</tissue>
    </source>
</reference>
<reference key="2">
    <citation type="journal article" date="2006" name="Nature">
        <title>The DNA sequence and biological annotation of human chromosome 1.</title>
        <authorList>
            <person name="Gregory S.G."/>
            <person name="Barlow K.F."/>
            <person name="McLay K.E."/>
            <person name="Kaul R."/>
            <person name="Swarbreck D."/>
            <person name="Dunham A."/>
            <person name="Scott C.E."/>
            <person name="Howe K.L."/>
            <person name="Woodfine K."/>
            <person name="Spencer C.C.A."/>
            <person name="Jones M.C."/>
            <person name="Gillson C."/>
            <person name="Searle S."/>
            <person name="Zhou Y."/>
            <person name="Kokocinski F."/>
            <person name="McDonald L."/>
            <person name="Evans R."/>
            <person name="Phillips K."/>
            <person name="Atkinson A."/>
            <person name="Cooper R."/>
            <person name="Jones C."/>
            <person name="Hall R.E."/>
            <person name="Andrews T.D."/>
            <person name="Lloyd C."/>
            <person name="Ainscough R."/>
            <person name="Almeida J.P."/>
            <person name="Ambrose K.D."/>
            <person name="Anderson F."/>
            <person name="Andrew R.W."/>
            <person name="Ashwell R.I.S."/>
            <person name="Aubin K."/>
            <person name="Babbage A.K."/>
            <person name="Bagguley C.L."/>
            <person name="Bailey J."/>
            <person name="Beasley H."/>
            <person name="Bethel G."/>
            <person name="Bird C.P."/>
            <person name="Bray-Allen S."/>
            <person name="Brown J.Y."/>
            <person name="Brown A.J."/>
            <person name="Buckley D."/>
            <person name="Burton J."/>
            <person name="Bye J."/>
            <person name="Carder C."/>
            <person name="Chapman J.C."/>
            <person name="Clark S.Y."/>
            <person name="Clarke G."/>
            <person name="Clee C."/>
            <person name="Cobley V."/>
            <person name="Collier R.E."/>
            <person name="Corby N."/>
            <person name="Coville G.J."/>
            <person name="Davies J."/>
            <person name="Deadman R."/>
            <person name="Dunn M."/>
            <person name="Earthrowl M."/>
            <person name="Ellington A.G."/>
            <person name="Errington H."/>
            <person name="Frankish A."/>
            <person name="Frankland J."/>
            <person name="French L."/>
            <person name="Garner P."/>
            <person name="Garnett J."/>
            <person name="Gay L."/>
            <person name="Ghori M.R.J."/>
            <person name="Gibson R."/>
            <person name="Gilby L.M."/>
            <person name="Gillett W."/>
            <person name="Glithero R.J."/>
            <person name="Grafham D.V."/>
            <person name="Griffiths C."/>
            <person name="Griffiths-Jones S."/>
            <person name="Grocock R."/>
            <person name="Hammond S."/>
            <person name="Harrison E.S.I."/>
            <person name="Hart E."/>
            <person name="Haugen E."/>
            <person name="Heath P.D."/>
            <person name="Holmes S."/>
            <person name="Holt K."/>
            <person name="Howden P.J."/>
            <person name="Hunt A.R."/>
            <person name="Hunt S.E."/>
            <person name="Hunter G."/>
            <person name="Isherwood J."/>
            <person name="James R."/>
            <person name="Johnson C."/>
            <person name="Johnson D."/>
            <person name="Joy A."/>
            <person name="Kay M."/>
            <person name="Kershaw J.K."/>
            <person name="Kibukawa M."/>
            <person name="Kimberley A.M."/>
            <person name="King A."/>
            <person name="Knights A.J."/>
            <person name="Lad H."/>
            <person name="Laird G."/>
            <person name="Lawlor S."/>
            <person name="Leongamornlert D.A."/>
            <person name="Lloyd D.M."/>
            <person name="Loveland J."/>
            <person name="Lovell J."/>
            <person name="Lush M.J."/>
            <person name="Lyne R."/>
            <person name="Martin S."/>
            <person name="Mashreghi-Mohammadi M."/>
            <person name="Matthews L."/>
            <person name="Matthews N.S.W."/>
            <person name="McLaren S."/>
            <person name="Milne S."/>
            <person name="Mistry S."/>
            <person name="Moore M.J.F."/>
            <person name="Nickerson T."/>
            <person name="O'Dell C.N."/>
            <person name="Oliver K."/>
            <person name="Palmeiri A."/>
            <person name="Palmer S.A."/>
            <person name="Parker A."/>
            <person name="Patel D."/>
            <person name="Pearce A.V."/>
            <person name="Peck A.I."/>
            <person name="Pelan S."/>
            <person name="Phelps K."/>
            <person name="Phillimore B.J."/>
            <person name="Plumb R."/>
            <person name="Rajan J."/>
            <person name="Raymond C."/>
            <person name="Rouse G."/>
            <person name="Saenphimmachak C."/>
            <person name="Sehra H.K."/>
            <person name="Sheridan E."/>
            <person name="Shownkeen R."/>
            <person name="Sims S."/>
            <person name="Skuce C.D."/>
            <person name="Smith M."/>
            <person name="Steward C."/>
            <person name="Subramanian S."/>
            <person name="Sycamore N."/>
            <person name="Tracey A."/>
            <person name="Tromans A."/>
            <person name="Van Helmond Z."/>
            <person name="Wall M."/>
            <person name="Wallis J.M."/>
            <person name="White S."/>
            <person name="Whitehead S.L."/>
            <person name="Wilkinson J.E."/>
            <person name="Willey D.L."/>
            <person name="Williams H."/>
            <person name="Wilming L."/>
            <person name="Wray P.W."/>
            <person name="Wu Z."/>
            <person name="Coulson A."/>
            <person name="Vaudin M."/>
            <person name="Sulston J.E."/>
            <person name="Durbin R.M."/>
            <person name="Hubbard T."/>
            <person name="Wooster R."/>
            <person name="Dunham I."/>
            <person name="Carter N.P."/>
            <person name="McVean G."/>
            <person name="Ross M.T."/>
            <person name="Harrow J."/>
            <person name="Olson M.V."/>
            <person name="Beck S."/>
            <person name="Rogers J."/>
            <person name="Bentley D.R."/>
        </authorList>
    </citation>
    <scope>NUCLEOTIDE SEQUENCE [LARGE SCALE GENOMIC DNA]</scope>
</reference>
<reference key="3">
    <citation type="journal article" date="2004" name="Genome Res.">
        <title>The status, quality, and expansion of the NIH full-length cDNA project: the Mammalian Gene Collection (MGC).</title>
        <authorList>
            <consortium name="The MGC Project Team"/>
        </authorList>
    </citation>
    <scope>NUCLEOTIDE SEQUENCE [LARGE SCALE MRNA]</scope>
    <scope>VARIANT VAL-206</scope>
    <source>
        <tissue>Heart</tissue>
        <tissue>Lung</tissue>
    </source>
</reference>
<reference key="4">
    <citation type="journal article" date="2012" name="Mol. Cell. Biol.">
        <title>Acyl coenzyme A thioesterase Them5/Acot15 is involved in cardiolipin remodeling and fatty liver development.</title>
        <authorList>
            <person name="Zhuravleva E."/>
            <person name="Gut H."/>
            <person name="Hynx D."/>
            <person name="Marcellin D."/>
            <person name="Bleck C.K."/>
            <person name="Genoud C."/>
            <person name="Cron P."/>
            <person name="Keusch J.J."/>
            <person name="Dummler B."/>
            <person name="Esposti M.D."/>
            <person name="Hemmings B.A."/>
        </authorList>
    </citation>
    <scope>X-RAY CRYSTALLOGRAPHY (1.45 ANGSTROMS) OF 35-247</scope>
    <scope>CATALYTIC ACTIVITY</scope>
    <scope>FUNCTION</scope>
    <scope>SUBUNIT</scope>
    <scope>SUBCELLULAR LOCATION</scope>
    <scope>BIOPHYSICOCHEMICAL PROPERTIES</scope>
    <scope>MUTAGENESIS OF GLY-160; ASP-167 AND THR-183</scope>
</reference>
<organism>
    <name type="scientific">Homo sapiens</name>
    <name type="common">Human</name>
    <dbReference type="NCBI Taxonomy" id="9606"/>
    <lineage>
        <taxon>Eukaryota</taxon>
        <taxon>Metazoa</taxon>
        <taxon>Chordata</taxon>
        <taxon>Craniata</taxon>
        <taxon>Vertebrata</taxon>
        <taxon>Euteleostomi</taxon>
        <taxon>Mammalia</taxon>
        <taxon>Eutheria</taxon>
        <taxon>Euarchontoglires</taxon>
        <taxon>Primates</taxon>
        <taxon>Haplorrhini</taxon>
        <taxon>Catarrhini</taxon>
        <taxon>Hominidae</taxon>
        <taxon>Homo</taxon>
    </lineage>
</organism>
<protein>
    <recommendedName>
        <fullName>Acyl-coenzyme A thioesterase THEM5</fullName>
        <shortName>Acyl-CoA thioesterase THEM5</shortName>
        <ecNumber evidence="4">3.1.2.2</ecNumber>
    </recommendedName>
    <alternativeName>
        <fullName>Acyl-coenzyme A thioesterase 15</fullName>
    </alternativeName>
    <alternativeName>
        <fullName>Thioesterase superfamily member 5</fullName>
    </alternativeName>
</protein>
<keyword id="KW-0002">3D-structure</keyword>
<keyword id="KW-0276">Fatty acid metabolism</keyword>
<keyword id="KW-0378">Hydrolase</keyword>
<keyword id="KW-0443">Lipid metabolism</keyword>
<keyword id="KW-0496">Mitochondrion</keyword>
<keyword id="KW-1267">Proteomics identification</keyword>
<keyword id="KW-1185">Reference proteome</keyword>
<proteinExistence type="evidence at protein level"/>
<dbReference type="EC" id="3.1.2.2" evidence="4"/>
<dbReference type="EMBL" id="AK095283">
    <property type="protein sequence ID" value="BAC04521.1"/>
    <property type="molecule type" value="mRNA"/>
</dbReference>
<dbReference type="EMBL" id="AL450992">
    <property type="status" value="NOT_ANNOTATED_CDS"/>
    <property type="molecule type" value="Genomic_DNA"/>
</dbReference>
<dbReference type="EMBL" id="BC101610">
    <property type="protein sequence ID" value="AAI01611.1"/>
    <property type="molecule type" value="mRNA"/>
</dbReference>
<dbReference type="EMBL" id="BC112239">
    <property type="protein sequence ID" value="AAI12240.1"/>
    <property type="molecule type" value="mRNA"/>
</dbReference>
<dbReference type="CCDS" id="CCDS1005.1"/>
<dbReference type="RefSeq" id="NP_872384.2">
    <property type="nucleotide sequence ID" value="NM_182578.4"/>
</dbReference>
<dbReference type="PDB" id="4AE7">
    <property type="method" value="X-ray"/>
    <property type="resolution" value="1.45 A"/>
    <property type="chains" value="A=35-247"/>
</dbReference>
<dbReference type="PDBsum" id="4AE7"/>
<dbReference type="SMR" id="Q8N1Q8"/>
<dbReference type="BioGRID" id="129888">
    <property type="interactions" value="18"/>
</dbReference>
<dbReference type="FunCoup" id="Q8N1Q8">
    <property type="interactions" value="29"/>
</dbReference>
<dbReference type="IntAct" id="Q8N1Q8">
    <property type="interactions" value="17"/>
</dbReference>
<dbReference type="STRING" id="9606.ENSP00000357807"/>
<dbReference type="SwissLipids" id="SLP:000000659"/>
<dbReference type="GlyGen" id="Q8N1Q8">
    <property type="glycosylation" value="1 site, 1 O-linked glycan (1 site)"/>
</dbReference>
<dbReference type="iPTMnet" id="Q8N1Q8"/>
<dbReference type="PhosphoSitePlus" id="Q8N1Q8"/>
<dbReference type="BioMuta" id="THEM5"/>
<dbReference type="DMDM" id="145566964"/>
<dbReference type="MassIVE" id="Q8N1Q8"/>
<dbReference type="PaxDb" id="9606-ENSP00000357807"/>
<dbReference type="PeptideAtlas" id="Q8N1Q8"/>
<dbReference type="Antibodypedia" id="34076">
    <property type="antibodies" value="65 antibodies from 13 providers"/>
</dbReference>
<dbReference type="DNASU" id="284486"/>
<dbReference type="Ensembl" id="ENST00000368817.10">
    <property type="protein sequence ID" value="ENSP00000357807.4"/>
    <property type="gene ID" value="ENSG00000196407.12"/>
</dbReference>
<dbReference type="GeneID" id="284486"/>
<dbReference type="KEGG" id="hsa:284486"/>
<dbReference type="MANE-Select" id="ENST00000368817.10">
    <property type="protein sequence ID" value="ENSP00000357807.4"/>
    <property type="RefSeq nucleotide sequence ID" value="NM_182578.4"/>
    <property type="RefSeq protein sequence ID" value="NP_872384.2"/>
</dbReference>
<dbReference type="UCSC" id="uc021oyw.2">
    <property type="organism name" value="human"/>
</dbReference>
<dbReference type="AGR" id="HGNC:26755"/>
<dbReference type="CTD" id="284486"/>
<dbReference type="DisGeNET" id="284486"/>
<dbReference type="GeneCards" id="THEM5"/>
<dbReference type="HGNC" id="HGNC:26755">
    <property type="gene designation" value="THEM5"/>
</dbReference>
<dbReference type="HPA" id="ENSG00000196407">
    <property type="expression patterns" value="Tissue enriched (skin)"/>
</dbReference>
<dbReference type="MIM" id="615653">
    <property type="type" value="gene"/>
</dbReference>
<dbReference type="neXtProt" id="NX_Q8N1Q8"/>
<dbReference type="OpenTargets" id="ENSG00000196407"/>
<dbReference type="PharmGKB" id="PA142670814"/>
<dbReference type="VEuPathDB" id="HostDB:ENSG00000196407"/>
<dbReference type="eggNOG" id="KOG4781">
    <property type="taxonomic scope" value="Eukaryota"/>
</dbReference>
<dbReference type="GeneTree" id="ENSGT00940000161937"/>
<dbReference type="HOGENOM" id="CLU_072603_0_0_1"/>
<dbReference type="InParanoid" id="Q8N1Q8"/>
<dbReference type="OMA" id="QVEGQGY"/>
<dbReference type="OrthoDB" id="506431at2759"/>
<dbReference type="PAN-GO" id="Q8N1Q8">
    <property type="GO annotations" value="4 GO annotations based on evolutionary models"/>
</dbReference>
<dbReference type="PhylomeDB" id="Q8N1Q8"/>
<dbReference type="TreeFam" id="TF332518"/>
<dbReference type="PathwayCommons" id="Q8N1Q8"/>
<dbReference type="Reactome" id="R-HSA-77289">
    <property type="pathway name" value="Mitochondrial Fatty Acid Beta-Oxidation"/>
</dbReference>
<dbReference type="SABIO-RK" id="Q8N1Q8"/>
<dbReference type="SignaLink" id="Q8N1Q8"/>
<dbReference type="BioGRID-ORCS" id="284486">
    <property type="hits" value="20 hits in 1145 CRISPR screens"/>
</dbReference>
<dbReference type="EvolutionaryTrace" id="Q8N1Q8"/>
<dbReference type="GenomeRNAi" id="284486"/>
<dbReference type="Pharos" id="Q8N1Q8">
    <property type="development level" value="Tbio"/>
</dbReference>
<dbReference type="PRO" id="PR:Q8N1Q8"/>
<dbReference type="Proteomes" id="UP000005640">
    <property type="component" value="Chromosome 1"/>
</dbReference>
<dbReference type="RNAct" id="Q8N1Q8">
    <property type="molecule type" value="protein"/>
</dbReference>
<dbReference type="Bgee" id="ENSG00000196407">
    <property type="expression patterns" value="Expressed in skin of leg and 98 other cell types or tissues"/>
</dbReference>
<dbReference type="ExpressionAtlas" id="Q8N1Q8">
    <property type="expression patterns" value="baseline and differential"/>
</dbReference>
<dbReference type="GO" id="GO:0005759">
    <property type="term" value="C:mitochondrial matrix"/>
    <property type="evidence" value="ECO:0000314"/>
    <property type="project" value="UniProtKB"/>
</dbReference>
<dbReference type="GO" id="GO:0005739">
    <property type="term" value="C:mitochondrion"/>
    <property type="evidence" value="ECO:0006056"/>
    <property type="project" value="FlyBase"/>
</dbReference>
<dbReference type="GO" id="GO:0052816">
    <property type="term" value="F:long-chain fatty acyl-CoA hydrolase activity"/>
    <property type="evidence" value="ECO:0000314"/>
    <property type="project" value="UniProtKB"/>
</dbReference>
<dbReference type="GO" id="GO:0035965">
    <property type="term" value="P:cardiolipin acyl-chain remodeling"/>
    <property type="evidence" value="ECO:0000318"/>
    <property type="project" value="GO_Central"/>
</dbReference>
<dbReference type="GO" id="GO:0006631">
    <property type="term" value="P:fatty acid metabolic process"/>
    <property type="evidence" value="ECO:0007669"/>
    <property type="project" value="UniProtKB-KW"/>
</dbReference>
<dbReference type="GO" id="GO:0035336">
    <property type="term" value="P:long-chain fatty-acyl-CoA metabolic process"/>
    <property type="evidence" value="ECO:0000314"/>
    <property type="project" value="UniProtKB"/>
</dbReference>
<dbReference type="CDD" id="cd03443">
    <property type="entry name" value="PaaI_thioesterase"/>
    <property type="match status" value="1"/>
</dbReference>
<dbReference type="FunFam" id="3.10.129.10:FF:000046">
    <property type="entry name" value="Acyl-coenzyme A thioesterase THEM4"/>
    <property type="match status" value="1"/>
</dbReference>
<dbReference type="Gene3D" id="3.10.129.10">
    <property type="entry name" value="Hotdog Thioesterase"/>
    <property type="match status" value="1"/>
</dbReference>
<dbReference type="InterPro" id="IPR029069">
    <property type="entry name" value="HotDog_dom_sf"/>
</dbReference>
<dbReference type="InterPro" id="IPR006683">
    <property type="entry name" value="Thioestr_dom"/>
</dbReference>
<dbReference type="PANTHER" id="PTHR47362">
    <property type="entry name" value="ACYL-COENZYME A THIOESTERASE THEM5"/>
    <property type="match status" value="1"/>
</dbReference>
<dbReference type="PANTHER" id="PTHR47362:SF1">
    <property type="entry name" value="ACYL-COENZYME A THIOESTERASE THEM5"/>
    <property type="match status" value="1"/>
</dbReference>
<dbReference type="Pfam" id="PF03061">
    <property type="entry name" value="4HBT"/>
    <property type="match status" value="1"/>
</dbReference>
<dbReference type="SUPFAM" id="SSF54637">
    <property type="entry name" value="Thioesterase/thiol ester dehydrase-isomerase"/>
    <property type="match status" value="1"/>
</dbReference>
<evidence type="ECO:0000250" key="1"/>
<evidence type="ECO:0000269" key="2">
    <source>
    </source>
</evidence>
<evidence type="ECO:0000269" key="3">
    <source>
    </source>
</evidence>
<evidence type="ECO:0000269" key="4">
    <source>
    </source>
</evidence>
<evidence type="ECO:0000305" key="5"/>
<evidence type="ECO:0000305" key="6">
    <source>
    </source>
</evidence>
<evidence type="ECO:0007829" key="7">
    <source>
        <dbReference type="PDB" id="4AE7"/>
    </source>
</evidence>